<feature type="chain" id="PRO_1000076257" description="Histidine--tRNA ligase">
    <location>
        <begin position="1"/>
        <end position="430"/>
    </location>
</feature>
<comment type="catalytic activity">
    <reaction evidence="1">
        <text>tRNA(His) + L-histidine + ATP = L-histidyl-tRNA(His) + AMP + diphosphate + H(+)</text>
        <dbReference type="Rhea" id="RHEA:17313"/>
        <dbReference type="Rhea" id="RHEA-COMP:9665"/>
        <dbReference type="Rhea" id="RHEA-COMP:9689"/>
        <dbReference type="ChEBI" id="CHEBI:15378"/>
        <dbReference type="ChEBI" id="CHEBI:30616"/>
        <dbReference type="ChEBI" id="CHEBI:33019"/>
        <dbReference type="ChEBI" id="CHEBI:57595"/>
        <dbReference type="ChEBI" id="CHEBI:78442"/>
        <dbReference type="ChEBI" id="CHEBI:78527"/>
        <dbReference type="ChEBI" id="CHEBI:456215"/>
        <dbReference type="EC" id="6.1.1.21"/>
    </reaction>
</comment>
<comment type="subunit">
    <text evidence="1">Homodimer.</text>
</comment>
<comment type="subcellular location">
    <subcellularLocation>
        <location evidence="1">Cytoplasm</location>
    </subcellularLocation>
</comment>
<comment type="similarity">
    <text evidence="1">Belongs to the class-II aminoacyl-tRNA synthetase family.</text>
</comment>
<accession>B0CDA0</accession>
<protein>
    <recommendedName>
        <fullName evidence="1">Histidine--tRNA ligase</fullName>
        <ecNumber evidence="1">6.1.1.21</ecNumber>
    </recommendedName>
    <alternativeName>
        <fullName evidence="1">Histidyl-tRNA synthetase</fullName>
        <shortName evidence="1">HisRS</shortName>
    </alternativeName>
</protein>
<keyword id="KW-0030">Aminoacyl-tRNA synthetase</keyword>
<keyword id="KW-0067">ATP-binding</keyword>
<keyword id="KW-0963">Cytoplasm</keyword>
<keyword id="KW-0436">Ligase</keyword>
<keyword id="KW-0547">Nucleotide-binding</keyword>
<keyword id="KW-0648">Protein biosynthesis</keyword>
<keyword id="KW-1185">Reference proteome</keyword>
<organism>
    <name type="scientific">Acaryochloris marina (strain MBIC 11017)</name>
    <dbReference type="NCBI Taxonomy" id="329726"/>
    <lineage>
        <taxon>Bacteria</taxon>
        <taxon>Bacillati</taxon>
        <taxon>Cyanobacteriota</taxon>
        <taxon>Cyanophyceae</taxon>
        <taxon>Acaryochloridales</taxon>
        <taxon>Acaryochloridaceae</taxon>
        <taxon>Acaryochloris</taxon>
    </lineage>
</organism>
<proteinExistence type="inferred from homology"/>
<evidence type="ECO:0000255" key="1">
    <source>
        <dbReference type="HAMAP-Rule" id="MF_00127"/>
    </source>
</evidence>
<dbReference type="EC" id="6.1.1.21" evidence="1"/>
<dbReference type="EMBL" id="CP000828">
    <property type="protein sequence ID" value="ABW25691.1"/>
    <property type="molecule type" value="Genomic_DNA"/>
</dbReference>
<dbReference type="RefSeq" id="WP_012161286.1">
    <property type="nucleotide sequence ID" value="NC_009925.1"/>
</dbReference>
<dbReference type="SMR" id="B0CDA0"/>
<dbReference type="STRING" id="329726.AM1_0642"/>
<dbReference type="KEGG" id="amr:AM1_0642"/>
<dbReference type="eggNOG" id="COG0124">
    <property type="taxonomic scope" value="Bacteria"/>
</dbReference>
<dbReference type="HOGENOM" id="CLU_025113_1_1_3"/>
<dbReference type="OrthoDB" id="9800814at2"/>
<dbReference type="Proteomes" id="UP000000268">
    <property type="component" value="Chromosome"/>
</dbReference>
<dbReference type="GO" id="GO:0005737">
    <property type="term" value="C:cytoplasm"/>
    <property type="evidence" value="ECO:0007669"/>
    <property type="project" value="UniProtKB-SubCell"/>
</dbReference>
<dbReference type="GO" id="GO:0005524">
    <property type="term" value="F:ATP binding"/>
    <property type="evidence" value="ECO:0007669"/>
    <property type="project" value="UniProtKB-UniRule"/>
</dbReference>
<dbReference type="GO" id="GO:0004821">
    <property type="term" value="F:histidine-tRNA ligase activity"/>
    <property type="evidence" value="ECO:0007669"/>
    <property type="project" value="UniProtKB-UniRule"/>
</dbReference>
<dbReference type="GO" id="GO:0006427">
    <property type="term" value="P:histidyl-tRNA aminoacylation"/>
    <property type="evidence" value="ECO:0007669"/>
    <property type="project" value="UniProtKB-UniRule"/>
</dbReference>
<dbReference type="CDD" id="cd00773">
    <property type="entry name" value="HisRS-like_core"/>
    <property type="match status" value="1"/>
</dbReference>
<dbReference type="CDD" id="cd00859">
    <property type="entry name" value="HisRS_anticodon"/>
    <property type="match status" value="1"/>
</dbReference>
<dbReference type="FunFam" id="3.30.930.10:FF:000005">
    <property type="entry name" value="Histidine--tRNA ligase"/>
    <property type="match status" value="1"/>
</dbReference>
<dbReference type="Gene3D" id="3.40.50.800">
    <property type="entry name" value="Anticodon-binding domain"/>
    <property type="match status" value="1"/>
</dbReference>
<dbReference type="Gene3D" id="3.30.930.10">
    <property type="entry name" value="Bira Bifunctional Protein, Domain 2"/>
    <property type="match status" value="1"/>
</dbReference>
<dbReference type="HAMAP" id="MF_00127">
    <property type="entry name" value="His_tRNA_synth"/>
    <property type="match status" value="1"/>
</dbReference>
<dbReference type="InterPro" id="IPR006195">
    <property type="entry name" value="aa-tRNA-synth_II"/>
</dbReference>
<dbReference type="InterPro" id="IPR045864">
    <property type="entry name" value="aa-tRNA-synth_II/BPL/LPL"/>
</dbReference>
<dbReference type="InterPro" id="IPR004154">
    <property type="entry name" value="Anticodon-bd"/>
</dbReference>
<dbReference type="InterPro" id="IPR036621">
    <property type="entry name" value="Anticodon-bd_dom_sf"/>
</dbReference>
<dbReference type="InterPro" id="IPR015807">
    <property type="entry name" value="His-tRNA-ligase"/>
</dbReference>
<dbReference type="InterPro" id="IPR041715">
    <property type="entry name" value="HisRS-like_core"/>
</dbReference>
<dbReference type="InterPro" id="IPR004516">
    <property type="entry name" value="HisRS/HisZ"/>
</dbReference>
<dbReference type="InterPro" id="IPR033656">
    <property type="entry name" value="HisRS_anticodon"/>
</dbReference>
<dbReference type="NCBIfam" id="TIGR00442">
    <property type="entry name" value="hisS"/>
    <property type="match status" value="1"/>
</dbReference>
<dbReference type="PANTHER" id="PTHR43707:SF1">
    <property type="entry name" value="HISTIDINE--TRNA LIGASE, MITOCHONDRIAL-RELATED"/>
    <property type="match status" value="1"/>
</dbReference>
<dbReference type="PANTHER" id="PTHR43707">
    <property type="entry name" value="HISTIDYL-TRNA SYNTHETASE"/>
    <property type="match status" value="1"/>
</dbReference>
<dbReference type="Pfam" id="PF03129">
    <property type="entry name" value="HGTP_anticodon"/>
    <property type="match status" value="1"/>
</dbReference>
<dbReference type="Pfam" id="PF13393">
    <property type="entry name" value="tRNA-synt_His"/>
    <property type="match status" value="1"/>
</dbReference>
<dbReference type="PIRSF" id="PIRSF001549">
    <property type="entry name" value="His-tRNA_synth"/>
    <property type="match status" value="1"/>
</dbReference>
<dbReference type="SUPFAM" id="SSF52954">
    <property type="entry name" value="Class II aaRS ABD-related"/>
    <property type="match status" value="1"/>
</dbReference>
<dbReference type="SUPFAM" id="SSF55681">
    <property type="entry name" value="Class II aaRS and biotin synthetases"/>
    <property type="match status" value="1"/>
</dbReference>
<dbReference type="PROSITE" id="PS50862">
    <property type="entry name" value="AA_TRNA_LIGASE_II"/>
    <property type="match status" value="1"/>
</dbReference>
<gene>
    <name evidence="1" type="primary">hisS</name>
    <name type="ordered locus">AM1_0642</name>
</gene>
<name>SYH_ACAM1</name>
<reference key="1">
    <citation type="journal article" date="2008" name="Proc. Natl. Acad. Sci. U.S.A.">
        <title>Niche adaptation and genome expansion in the chlorophyll d-producing cyanobacterium Acaryochloris marina.</title>
        <authorList>
            <person name="Swingley W.D."/>
            <person name="Chen M."/>
            <person name="Cheung P.C."/>
            <person name="Conrad A.L."/>
            <person name="Dejesa L.C."/>
            <person name="Hao J."/>
            <person name="Honchak B.M."/>
            <person name="Karbach L.E."/>
            <person name="Kurdoglu A."/>
            <person name="Lahiri S."/>
            <person name="Mastrian S.D."/>
            <person name="Miyashita H."/>
            <person name="Page L."/>
            <person name="Ramakrishna P."/>
            <person name="Satoh S."/>
            <person name="Sattley W.M."/>
            <person name="Shimada Y."/>
            <person name="Taylor H.L."/>
            <person name="Tomo T."/>
            <person name="Tsuchiya T."/>
            <person name="Wang Z.T."/>
            <person name="Raymond J."/>
            <person name="Mimuro M."/>
            <person name="Blankenship R.E."/>
            <person name="Touchman J.W."/>
        </authorList>
    </citation>
    <scope>NUCLEOTIDE SEQUENCE [LARGE SCALE GENOMIC DNA]</scope>
    <source>
        <strain>MBIC 11017</strain>
    </source>
</reference>
<sequence>MGFIQVSRGTRDILPDEVIYWQYVEATARQLLHQAAYRELRTPIFEQTNLFERGIGEATDVVGKEMYTFQDRGDRSITLRPEGTAGAVRSFIENKLHAQGGVQRLWYIGPMFRYERPGAGRQRQFHQIGVEALGSQDPRADAEVIAIASQLLKSLGVPDWTLSLNSLGTAEDRQKYREALVTYLSQYKDDLDPDSQDRLQRNPLRILDSKDPKTKEIAQSAPNILDYLGTDSKQHFDRVQQLLTDLDIAYKLNPCLVRGLDYYTHTAFEFELEGLGNQATVCGGGRYDRLVSELGGPETPAVGWAIGMERLILLLQNAEITLNQSLDFYCVARGPEAEAQALLICQNLRENGFSVEMDLSGSAFGKQLKRANRSGALACLILGDTEACDRTVQLKWLASGEQESIAQADLRNLTSQLQSKLTAAKGNSST</sequence>